<gene>
    <name type="primary">Coro1a</name>
    <name type="synonym">Coro1</name>
</gene>
<accession>O89053</accession>
<accession>Q7TMU0</accession>
<accession>Q9R1Y8</accession>
<accession>Q9R288</accession>
<name>COR1A_MOUSE</name>
<organism>
    <name type="scientific">Mus musculus</name>
    <name type="common">Mouse</name>
    <dbReference type="NCBI Taxonomy" id="10090"/>
    <lineage>
        <taxon>Eukaryota</taxon>
        <taxon>Metazoa</taxon>
        <taxon>Chordata</taxon>
        <taxon>Craniata</taxon>
        <taxon>Vertebrata</taxon>
        <taxon>Euteleostomi</taxon>
        <taxon>Mammalia</taxon>
        <taxon>Eutheria</taxon>
        <taxon>Euarchontoglires</taxon>
        <taxon>Glires</taxon>
        <taxon>Rodentia</taxon>
        <taxon>Myomorpha</taxon>
        <taxon>Muroidea</taxon>
        <taxon>Muridae</taxon>
        <taxon>Murinae</taxon>
        <taxon>Mus</taxon>
        <taxon>Mus</taxon>
    </lineage>
</organism>
<keyword id="KW-0002">3D-structure</keyword>
<keyword id="KW-0007">Acetylation</keyword>
<keyword id="KW-0009">Actin-binding</keyword>
<keyword id="KW-0175">Coiled coil</keyword>
<keyword id="KW-0963">Cytoplasm</keyword>
<keyword id="KW-0968">Cytoplasmic vesicle</keyword>
<keyword id="KW-0206">Cytoskeleton</keyword>
<keyword id="KW-0903">Direct protein sequencing</keyword>
<keyword id="KW-0472">Membrane</keyword>
<keyword id="KW-0597">Phosphoprotein</keyword>
<keyword id="KW-1185">Reference proteome</keyword>
<keyword id="KW-0677">Repeat</keyword>
<keyword id="KW-0832">Ubl conjugation</keyword>
<keyword id="KW-0853">WD repeat</keyword>
<proteinExistence type="evidence at protein level"/>
<comment type="function">
    <text evidence="5">May be a crucial component of the cytoskeleton of highly motile cells, functioning both in the invagination of large pieces of plasma membrane, as well as in forming protrusions of the plasma membrane involved in cell locomotion. In mycobacteria-infected cells, its retention on the phagosomal membrane prevents fusion between phagosomes and lysosomes.</text>
</comment>
<comment type="subunit">
    <text evidence="1">Binds actin.</text>
</comment>
<comment type="interaction">
    <interactant intactId="EBI-6665847">
        <id>O89053</id>
    </interactant>
    <interactant intactId="EBI-1047114">
        <id>P63092</id>
        <label>GNAS</label>
    </interactant>
    <organismsDiffer>true</organismsDiffer>
    <experiments>2</experiments>
</comment>
<comment type="subcellular location">
    <subcellularLocation>
        <location evidence="5">Cytoplasm</location>
        <location evidence="5">Cytoskeleton</location>
    </subcellularLocation>
    <subcellularLocation>
        <location evidence="5">Cytoplasm</location>
        <location evidence="5">Cell cortex</location>
    </subcellularLocation>
    <subcellularLocation>
        <location evidence="5">Cytoplasmic vesicle</location>
        <location evidence="5">Phagosome membrane</location>
    </subcellularLocation>
    <text>In non-infected macrophages, associated with the cortical microtubule network. In mycobacteria-infected macrophages, becomes progressively relocalized and retained around the mycobacterial phagosomes. Retention on the phagosomal membrane is strictly dependent on mycobacterial viability and not due to impaired acidification.</text>
</comment>
<comment type="tissue specificity">
    <text evidence="5">Expressed in spleen, lymph nodes, thymus, brain and at very lower levels in lung. Also expressed in cells of the lymphoid/myeloid lineage. Not expressed in Kuffper cells.</text>
</comment>
<comment type="PTM">
    <text evidence="1">phosphorylation at Ser-412 by PKC strongly down-regulates the association with actin.</text>
</comment>
<comment type="PTM">
    <text evidence="1">Polyubiquitinated by RNF128 with 'Lys-48'-linked chains, leading to proteasomal degradation.</text>
</comment>
<comment type="similarity">
    <text evidence="9">Belongs to the WD repeat coronin family.</text>
</comment>
<dbReference type="EMBL" id="AF143955">
    <property type="protein sequence ID" value="AAD32703.1"/>
    <property type="molecule type" value="mRNA"/>
</dbReference>
<dbReference type="EMBL" id="AF047388">
    <property type="protein sequence ID" value="AAD31082.1"/>
    <property type="molecule type" value="mRNA"/>
</dbReference>
<dbReference type="EMBL" id="AF495468">
    <property type="protein sequence ID" value="AAM18514.1"/>
    <property type="molecule type" value="mRNA"/>
</dbReference>
<dbReference type="EMBL" id="BC002136">
    <property type="protein sequence ID" value="AAH02136.1"/>
    <property type="molecule type" value="mRNA"/>
</dbReference>
<dbReference type="EMBL" id="BC053398">
    <property type="protein sequence ID" value="AAH53398.1"/>
    <property type="molecule type" value="mRNA"/>
</dbReference>
<dbReference type="EMBL" id="U89399">
    <property type="protein sequence ID" value="AAC36506.1"/>
    <property type="molecule type" value="mRNA"/>
</dbReference>
<dbReference type="CCDS" id="CCDS21840.1"/>
<dbReference type="RefSeq" id="NP_001288303.1">
    <property type="nucleotide sequence ID" value="NM_001301374.2"/>
</dbReference>
<dbReference type="RefSeq" id="NP_001399176.1">
    <property type="nucleotide sequence ID" value="NM_001412247.1"/>
</dbReference>
<dbReference type="RefSeq" id="NP_001399177.1">
    <property type="nucleotide sequence ID" value="NM_001412248.1"/>
</dbReference>
<dbReference type="RefSeq" id="NP_034028.1">
    <property type="nucleotide sequence ID" value="NM_009898.4"/>
</dbReference>
<dbReference type="RefSeq" id="XP_006507347.1">
    <property type="nucleotide sequence ID" value="XM_006507284.3"/>
</dbReference>
<dbReference type="RefSeq" id="XP_006507348.1">
    <property type="nucleotide sequence ID" value="XM_006507285.4"/>
</dbReference>
<dbReference type="PDB" id="2AKF">
    <property type="method" value="X-ray"/>
    <property type="resolution" value="1.20 A"/>
    <property type="chains" value="A/B/C=430-461"/>
</dbReference>
<dbReference type="PDB" id="2AQ5">
    <property type="method" value="X-ray"/>
    <property type="resolution" value="1.75 A"/>
    <property type="chains" value="A=1-402"/>
</dbReference>
<dbReference type="PDB" id="2B4E">
    <property type="method" value="X-ray"/>
    <property type="resolution" value="2.30 A"/>
    <property type="chains" value="A=1-402"/>
</dbReference>
<dbReference type="PDBsum" id="2AKF"/>
<dbReference type="PDBsum" id="2AQ5"/>
<dbReference type="PDBsum" id="2B4E"/>
<dbReference type="SMR" id="O89053"/>
<dbReference type="BioGRID" id="198732">
    <property type="interactions" value="46"/>
</dbReference>
<dbReference type="FunCoup" id="O89053">
    <property type="interactions" value="1140"/>
</dbReference>
<dbReference type="IntAct" id="O89053">
    <property type="interactions" value="2"/>
</dbReference>
<dbReference type="MINT" id="O89053"/>
<dbReference type="STRING" id="10090.ENSMUSP00000101972"/>
<dbReference type="GlyGen" id="O89053">
    <property type="glycosylation" value="2 sites, 1 O-linked glycan (1 site)"/>
</dbReference>
<dbReference type="iPTMnet" id="O89053"/>
<dbReference type="PhosphoSitePlus" id="O89053"/>
<dbReference type="SwissPalm" id="O89053"/>
<dbReference type="CPTAC" id="non-CPTAC-3507"/>
<dbReference type="CPTAC" id="non-CPTAC-3905"/>
<dbReference type="jPOST" id="O89053"/>
<dbReference type="PaxDb" id="10090-ENSMUSP00000032949"/>
<dbReference type="PeptideAtlas" id="O89053"/>
<dbReference type="ProteomicsDB" id="284091"/>
<dbReference type="Antibodypedia" id="27060">
    <property type="antibodies" value="476 antibodies from 39 providers"/>
</dbReference>
<dbReference type="DNASU" id="12721"/>
<dbReference type="Ensembl" id="ENSMUST00000032949.14">
    <property type="protein sequence ID" value="ENSMUSP00000032949.8"/>
    <property type="gene ID" value="ENSMUSG00000030707.16"/>
</dbReference>
<dbReference type="Ensembl" id="ENSMUST00000106364.8">
    <property type="protein sequence ID" value="ENSMUSP00000101972.2"/>
    <property type="gene ID" value="ENSMUSG00000030707.16"/>
</dbReference>
<dbReference type="GeneID" id="12721"/>
<dbReference type="KEGG" id="mmu:12721"/>
<dbReference type="UCSC" id="uc009jsk.2">
    <property type="organism name" value="mouse"/>
</dbReference>
<dbReference type="AGR" id="MGI:1345961"/>
<dbReference type="CTD" id="11151"/>
<dbReference type="MGI" id="MGI:1345961">
    <property type="gene designation" value="Coro1a"/>
</dbReference>
<dbReference type="VEuPathDB" id="HostDB:ENSMUSG00000030707"/>
<dbReference type="eggNOG" id="KOG0303">
    <property type="taxonomic scope" value="Eukaryota"/>
</dbReference>
<dbReference type="GeneTree" id="ENSGT00940000160628"/>
<dbReference type="HOGENOM" id="CLU_026859_0_1_1"/>
<dbReference type="InParanoid" id="O89053"/>
<dbReference type="OMA" id="MVMVWEI"/>
<dbReference type="OrthoDB" id="1850764at2759"/>
<dbReference type="PhylomeDB" id="O89053"/>
<dbReference type="TreeFam" id="TF314280"/>
<dbReference type="BioGRID-ORCS" id="12721">
    <property type="hits" value="3 hits in 77 CRISPR screens"/>
</dbReference>
<dbReference type="CD-CODE" id="CE726F99">
    <property type="entry name" value="Postsynaptic density"/>
</dbReference>
<dbReference type="ChiTaRS" id="Coro1a">
    <property type="organism name" value="mouse"/>
</dbReference>
<dbReference type="EvolutionaryTrace" id="O89053"/>
<dbReference type="PRO" id="PR:O89053"/>
<dbReference type="Proteomes" id="UP000000589">
    <property type="component" value="Chromosome 7"/>
</dbReference>
<dbReference type="RNAct" id="O89053">
    <property type="molecule type" value="protein"/>
</dbReference>
<dbReference type="Bgee" id="ENSMUSG00000030707">
    <property type="expression patterns" value="Expressed in peripheral lymph node and 227 other cell types or tissues"/>
</dbReference>
<dbReference type="ExpressionAtlas" id="O89053">
    <property type="expression patterns" value="baseline and differential"/>
</dbReference>
<dbReference type="GO" id="GO:0015629">
    <property type="term" value="C:actin cytoskeleton"/>
    <property type="evidence" value="ECO:0000314"/>
    <property type="project" value="MGI"/>
</dbReference>
<dbReference type="GO" id="GO:0005884">
    <property type="term" value="C:actin filament"/>
    <property type="evidence" value="ECO:0007669"/>
    <property type="project" value="Ensembl"/>
</dbReference>
<dbReference type="GO" id="GO:0030424">
    <property type="term" value="C:axon"/>
    <property type="evidence" value="ECO:0000314"/>
    <property type="project" value="MGI"/>
</dbReference>
<dbReference type="GO" id="GO:0031252">
    <property type="term" value="C:cell leading edge"/>
    <property type="evidence" value="ECO:0000314"/>
    <property type="project" value="MGI"/>
</dbReference>
<dbReference type="GO" id="GO:0005911">
    <property type="term" value="C:cell-cell junction"/>
    <property type="evidence" value="ECO:0000314"/>
    <property type="project" value="MGI"/>
</dbReference>
<dbReference type="GO" id="GO:0030864">
    <property type="term" value="C:cortical actin cytoskeleton"/>
    <property type="evidence" value="ECO:0007669"/>
    <property type="project" value="Ensembl"/>
</dbReference>
<dbReference type="GO" id="GO:0005769">
    <property type="term" value="C:early endosome"/>
    <property type="evidence" value="ECO:0000314"/>
    <property type="project" value="MGI"/>
</dbReference>
<dbReference type="GO" id="GO:0098978">
    <property type="term" value="C:glutamatergic synapse"/>
    <property type="evidence" value="ECO:0000314"/>
    <property type="project" value="SynGO"/>
</dbReference>
<dbReference type="GO" id="GO:0001772">
    <property type="term" value="C:immunological synapse"/>
    <property type="evidence" value="ECO:0000314"/>
    <property type="project" value="MGI"/>
</dbReference>
<dbReference type="GO" id="GO:0030027">
    <property type="term" value="C:lamellipodium"/>
    <property type="evidence" value="ECO:0007669"/>
    <property type="project" value="Ensembl"/>
</dbReference>
<dbReference type="GO" id="GO:0001891">
    <property type="term" value="C:phagocytic cup"/>
    <property type="evidence" value="ECO:0007669"/>
    <property type="project" value="Ensembl"/>
</dbReference>
<dbReference type="GO" id="GO:0030670">
    <property type="term" value="C:phagocytic vesicle membrane"/>
    <property type="evidence" value="ECO:0007669"/>
    <property type="project" value="UniProtKB-SubCell"/>
</dbReference>
<dbReference type="GO" id="GO:0005886">
    <property type="term" value="C:plasma membrane"/>
    <property type="evidence" value="ECO:0000314"/>
    <property type="project" value="MGI"/>
</dbReference>
<dbReference type="GO" id="GO:0032991">
    <property type="term" value="C:protein-containing complex"/>
    <property type="evidence" value="ECO:0007669"/>
    <property type="project" value="Ensembl"/>
</dbReference>
<dbReference type="GO" id="GO:0032426">
    <property type="term" value="C:stereocilium tip"/>
    <property type="evidence" value="ECO:0000269"/>
    <property type="project" value="MGI"/>
</dbReference>
<dbReference type="GO" id="GO:0045202">
    <property type="term" value="C:synapse"/>
    <property type="evidence" value="ECO:0000314"/>
    <property type="project" value="SynGO"/>
</dbReference>
<dbReference type="GO" id="GO:0051015">
    <property type="term" value="F:actin filament binding"/>
    <property type="evidence" value="ECO:0000314"/>
    <property type="project" value="MGI"/>
</dbReference>
<dbReference type="GO" id="GO:0003785">
    <property type="term" value="F:actin monomer binding"/>
    <property type="evidence" value="ECO:0007669"/>
    <property type="project" value="Ensembl"/>
</dbReference>
<dbReference type="GO" id="GO:0008092">
    <property type="term" value="F:cytoskeletal protein binding"/>
    <property type="evidence" value="ECO:0000315"/>
    <property type="project" value="UniProtKB"/>
</dbReference>
<dbReference type="GO" id="GO:0042802">
    <property type="term" value="F:identical protein binding"/>
    <property type="evidence" value="ECO:0000353"/>
    <property type="project" value="MGI"/>
</dbReference>
<dbReference type="GO" id="GO:0032036">
    <property type="term" value="F:myosin heavy chain binding"/>
    <property type="evidence" value="ECO:0007669"/>
    <property type="project" value="Ensembl"/>
</dbReference>
<dbReference type="GO" id="GO:0043548">
    <property type="term" value="F:phosphatidylinositol 3-kinase binding"/>
    <property type="evidence" value="ECO:0007669"/>
    <property type="project" value="Ensembl"/>
</dbReference>
<dbReference type="GO" id="GO:0042803">
    <property type="term" value="F:protein homodimerization activity"/>
    <property type="evidence" value="ECO:0007669"/>
    <property type="project" value="Ensembl"/>
</dbReference>
<dbReference type="GO" id="GO:0007015">
    <property type="term" value="P:actin filament organization"/>
    <property type="evidence" value="ECO:0000315"/>
    <property type="project" value="MGI"/>
</dbReference>
<dbReference type="GO" id="GO:0006816">
    <property type="term" value="P:calcium ion transport"/>
    <property type="evidence" value="ECO:0000315"/>
    <property type="project" value="MGI"/>
</dbReference>
<dbReference type="GO" id="GO:0031589">
    <property type="term" value="P:cell-substrate adhesion"/>
    <property type="evidence" value="ECO:0007669"/>
    <property type="project" value="Ensembl"/>
</dbReference>
<dbReference type="GO" id="GO:0071353">
    <property type="term" value="P:cellular response to interleukin-4"/>
    <property type="evidence" value="ECO:0000314"/>
    <property type="project" value="MGI"/>
</dbReference>
<dbReference type="GO" id="GO:0061502">
    <property type="term" value="P:early endosome to recycling endosome transport"/>
    <property type="evidence" value="ECO:0000315"/>
    <property type="project" value="MGI"/>
</dbReference>
<dbReference type="GO" id="GO:0010631">
    <property type="term" value="P:epithelial cell migration"/>
    <property type="evidence" value="ECO:0000315"/>
    <property type="project" value="MGI"/>
</dbReference>
<dbReference type="GO" id="GO:0051649">
    <property type="term" value="P:establishment of localization in cell"/>
    <property type="evidence" value="ECO:0000315"/>
    <property type="project" value="MGI"/>
</dbReference>
<dbReference type="GO" id="GO:0048873">
    <property type="term" value="P:homeostasis of number of cells within a tissue"/>
    <property type="evidence" value="ECO:0000315"/>
    <property type="project" value="MGI"/>
</dbReference>
<dbReference type="GO" id="GO:0030595">
    <property type="term" value="P:leukocyte chemotaxis"/>
    <property type="evidence" value="ECO:0000315"/>
    <property type="project" value="MGI"/>
</dbReference>
<dbReference type="GO" id="GO:0043320">
    <property type="term" value="P:natural killer cell degranulation"/>
    <property type="evidence" value="ECO:0007669"/>
    <property type="project" value="Ensembl"/>
</dbReference>
<dbReference type="GO" id="GO:0051126">
    <property type="term" value="P:negative regulation of actin nucleation"/>
    <property type="evidence" value="ECO:0007669"/>
    <property type="project" value="Ensembl"/>
</dbReference>
<dbReference type="GO" id="GO:0043524">
    <property type="term" value="P:negative regulation of neuron apoptotic process"/>
    <property type="evidence" value="ECO:0000316"/>
    <property type="project" value="MGI"/>
</dbReference>
<dbReference type="GO" id="GO:0031339">
    <property type="term" value="P:negative regulation of vesicle fusion"/>
    <property type="evidence" value="ECO:0000315"/>
    <property type="project" value="MGI"/>
</dbReference>
<dbReference type="GO" id="GO:0038180">
    <property type="term" value="P:nerve growth factor signaling pathway"/>
    <property type="evidence" value="ECO:0000316"/>
    <property type="project" value="MGI"/>
</dbReference>
<dbReference type="GO" id="GO:0051402">
    <property type="term" value="P:neuron apoptotic process"/>
    <property type="evidence" value="ECO:0000316"/>
    <property type="project" value="MGI"/>
</dbReference>
<dbReference type="GO" id="GO:0001845">
    <property type="term" value="P:phagolysosome assembly"/>
    <property type="evidence" value="ECO:0007669"/>
    <property type="project" value="Ensembl"/>
</dbReference>
<dbReference type="GO" id="GO:0050918">
    <property type="term" value="P:positive chemotaxis"/>
    <property type="evidence" value="ECO:0007669"/>
    <property type="project" value="Ensembl"/>
</dbReference>
<dbReference type="GO" id="GO:0050870">
    <property type="term" value="P:positive regulation of T cell activation"/>
    <property type="evidence" value="ECO:0000315"/>
    <property type="project" value="MGI"/>
</dbReference>
<dbReference type="GO" id="GO:2000406">
    <property type="term" value="P:positive regulation of T cell migration"/>
    <property type="evidence" value="ECO:0000315"/>
    <property type="project" value="MGI"/>
</dbReference>
<dbReference type="GO" id="GO:0042102">
    <property type="term" value="P:positive regulation of T cell proliferation"/>
    <property type="evidence" value="ECO:0000315"/>
    <property type="project" value="MGI"/>
</dbReference>
<dbReference type="GO" id="GO:0030833">
    <property type="term" value="P:regulation of actin filament polymerization"/>
    <property type="evidence" value="ECO:0000315"/>
    <property type="project" value="MGI"/>
</dbReference>
<dbReference type="GO" id="GO:0008064">
    <property type="term" value="P:regulation of actin polymerization or depolymerization"/>
    <property type="evidence" value="ECO:0000315"/>
    <property type="project" value="MGI"/>
</dbReference>
<dbReference type="GO" id="GO:0008360">
    <property type="term" value="P:regulation of cell shape"/>
    <property type="evidence" value="ECO:0000315"/>
    <property type="project" value="MGI"/>
</dbReference>
<dbReference type="GO" id="GO:0051279">
    <property type="term" value="P:regulation of release of sequestered calcium ion into cytosol"/>
    <property type="evidence" value="ECO:0000316"/>
    <property type="project" value="MGI"/>
</dbReference>
<dbReference type="GO" id="GO:0034097">
    <property type="term" value="P:response to cytokine"/>
    <property type="evidence" value="ECO:0000315"/>
    <property type="project" value="MGI"/>
</dbReference>
<dbReference type="GO" id="GO:0042110">
    <property type="term" value="P:T cell activation"/>
    <property type="evidence" value="ECO:0000315"/>
    <property type="project" value="MGI"/>
</dbReference>
<dbReference type="GO" id="GO:0043029">
    <property type="term" value="P:T cell homeostasis"/>
    <property type="evidence" value="ECO:0000315"/>
    <property type="project" value="MGI"/>
</dbReference>
<dbReference type="GO" id="GO:0072678">
    <property type="term" value="P:T cell migration"/>
    <property type="evidence" value="ECO:0000315"/>
    <property type="project" value="MGI"/>
</dbReference>
<dbReference type="GO" id="GO:0042098">
    <property type="term" value="P:T cell proliferation"/>
    <property type="evidence" value="ECO:0000315"/>
    <property type="project" value="MGI"/>
</dbReference>
<dbReference type="GO" id="GO:0072679">
    <property type="term" value="P:thymocyte migration"/>
    <property type="evidence" value="ECO:0000315"/>
    <property type="project" value="MGI"/>
</dbReference>
<dbReference type="GO" id="GO:0032796">
    <property type="term" value="P:uropod organization"/>
    <property type="evidence" value="ECO:0000315"/>
    <property type="project" value="MGI"/>
</dbReference>
<dbReference type="GO" id="GO:0006906">
    <property type="term" value="P:vesicle fusion"/>
    <property type="evidence" value="ECO:0000315"/>
    <property type="project" value="MGI"/>
</dbReference>
<dbReference type="FunFam" id="2.130.10.10:FF:000003">
    <property type="entry name" value="Coronin"/>
    <property type="match status" value="1"/>
</dbReference>
<dbReference type="Gene3D" id="2.130.10.10">
    <property type="entry name" value="YVTN repeat-like/Quinoprotein amine dehydrogenase"/>
    <property type="match status" value="1"/>
</dbReference>
<dbReference type="InterPro" id="IPR015505">
    <property type="entry name" value="Coronin"/>
</dbReference>
<dbReference type="InterPro" id="IPR015048">
    <property type="entry name" value="DUF1899"/>
</dbReference>
<dbReference type="InterPro" id="IPR015049">
    <property type="entry name" value="Trimer_CC"/>
</dbReference>
<dbReference type="InterPro" id="IPR015943">
    <property type="entry name" value="WD40/YVTN_repeat-like_dom_sf"/>
</dbReference>
<dbReference type="InterPro" id="IPR019775">
    <property type="entry name" value="WD40_repeat_CS"/>
</dbReference>
<dbReference type="InterPro" id="IPR036322">
    <property type="entry name" value="WD40_repeat_dom_sf"/>
</dbReference>
<dbReference type="InterPro" id="IPR001680">
    <property type="entry name" value="WD40_rpt"/>
</dbReference>
<dbReference type="PANTHER" id="PTHR10856">
    <property type="entry name" value="CORONIN"/>
    <property type="match status" value="1"/>
</dbReference>
<dbReference type="PANTHER" id="PTHR10856:SF18">
    <property type="entry name" value="CORONIN-1A"/>
    <property type="match status" value="1"/>
</dbReference>
<dbReference type="Pfam" id="PF08953">
    <property type="entry name" value="DUF1899"/>
    <property type="match status" value="1"/>
</dbReference>
<dbReference type="Pfam" id="PF08954">
    <property type="entry name" value="Trimer_CC"/>
    <property type="match status" value="1"/>
</dbReference>
<dbReference type="Pfam" id="PF00400">
    <property type="entry name" value="WD40"/>
    <property type="match status" value="3"/>
</dbReference>
<dbReference type="Pfam" id="PF16300">
    <property type="entry name" value="WD40_4"/>
    <property type="match status" value="1"/>
</dbReference>
<dbReference type="SMART" id="SM01166">
    <property type="entry name" value="DUF1899"/>
    <property type="match status" value="1"/>
</dbReference>
<dbReference type="SMART" id="SM01167">
    <property type="entry name" value="DUF1900"/>
    <property type="match status" value="1"/>
</dbReference>
<dbReference type="SMART" id="SM00320">
    <property type="entry name" value="WD40"/>
    <property type="match status" value="3"/>
</dbReference>
<dbReference type="SUPFAM" id="SSF50978">
    <property type="entry name" value="WD40 repeat-like"/>
    <property type="match status" value="1"/>
</dbReference>
<dbReference type="PROSITE" id="PS00678">
    <property type="entry name" value="WD_REPEATS_1"/>
    <property type="match status" value="2"/>
</dbReference>
<dbReference type="PROSITE" id="PS50082">
    <property type="entry name" value="WD_REPEATS_2"/>
    <property type="match status" value="2"/>
</dbReference>
<dbReference type="PROSITE" id="PS50294">
    <property type="entry name" value="WD_REPEATS_REGION"/>
    <property type="match status" value="1"/>
</dbReference>
<reference key="1">
    <citation type="journal article" date="1998" name="DNA Cell Biol.">
        <title>Definition of family of coronin-related proteins conserved between humans and mice: close genetic linkage between coronin-2 and CD45-associated protein.</title>
        <authorList>
            <person name="Okumura M."/>
            <person name="Kung C."/>
            <person name="Wong S."/>
            <person name="Rodgers M."/>
            <person name="Thomas M.L."/>
        </authorList>
    </citation>
    <scope>NUCLEOTIDE SEQUENCE [MRNA]</scope>
</reference>
<reference key="2">
    <citation type="journal article" date="1999" name="Cell">
        <title>A coat protein on phagosomes involved in the intracellular survival of mycobacteria.</title>
        <authorList>
            <person name="Ferrari G."/>
            <person name="Langen H."/>
            <person name="Naito M."/>
            <person name="Pieters J."/>
        </authorList>
    </citation>
    <scope>NUCLEOTIDE SEQUENCE [MRNA]</scope>
    <scope>PROTEIN SEQUENCE OF 11-14</scope>
    <scope>TISSUE SPECIFICITY</scope>
    <scope>SUBCELLULAR LOCATION</scope>
    <scope>ROLE IN PHAGOSOME TRAFFICKING</scope>
    <source>
        <strain>C57BL/6J</strain>
        <tissue>Macrophage</tissue>
    </source>
</reference>
<reference key="3">
    <citation type="submission" date="2002-03" db="EMBL/GenBank/DDBJ databases">
        <title>A new therapeutic strategy of mycobacterium infection by use of anti-TACO sequence.</title>
        <authorList>
            <person name="Kohchi C."/>
            <person name="Inagawa H."/>
            <person name="Makino K."/>
            <person name="Terada H."/>
            <person name="Soma G."/>
        </authorList>
    </citation>
    <scope>NUCLEOTIDE SEQUENCE [MRNA]</scope>
</reference>
<reference key="4">
    <citation type="journal article" date="2004" name="Genome Res.">
        <title>The status, quality, and expansion of the NIH full-length cDNA project: the Mammalian Gene Collection (MGC).</title>
        <authorList>
            <consortium name="The MGC Project Team"/>
        </authorList>
    </citation>
    <scope>NUCLEOTIDE SEQUENCE [LARGE SCALE MRNA]</scope>
    <source>
        <tissue>Hematopoietic</tissue>
        <tissue>Mammary tumor</tissue>
    </source>
</reference>
<reference key="5">
    <citation type="journal article" date="1998" name="Mol. Immunol.">
        <title>Expressed genes in interleukin-4 treated B cells identified by cDNA representational difference analysis.</title>
        <authorList>
            <person name="Chu C.C."/>
            <person name="Paul W.E."/>
        </authorList>
    </citation>
    <scope>NUCLEOTIDE SEQUENCE [MRNA] OF 156-276</scope>
    <source>
        <strain>BALB/cJ</strain>
        <tissue>Spleen</tissue>
    </source>
</reference>
<reference key="6">
    <citation type="submission" date="2007-03" db="UniProtKB">
        <authorList>
            <person name="Lubec G."/>
            <person name="Klug S."/>
        </authorList>
    </citation>
    <scope>PROTEIN SEQUENCE OF 215-233</scope>
    <scope>IDENTIFICATION BY MASS SPECTROMETRY</scope>
    <source>
        <tissue>Hippocampus</tissue>
    </source>
</reference>
<reference key="7">
    <citation type="journal article" date="2009" name="Immunity">
        <title>The phagosomal proteome in interferon-gamma-activated macrophages.</title>
        <authorList>
            <person name="Trost M."/>
            <person name="English L."/>
            <person name="Lemieux S."/>
            <person name="Courcelles M."/>
            <person name="Desjardins M."/>
            <person name="Thibault P."/>
        </authorList>
    </citation>
    <scope>PHOSPHORYLATION [LARGE SCALE ANALYSIS] AT THR-418</scope>
    <scope>IDENTIFICATION BY MASS SPECTROMETRY [LARGE SCALE ANALYSIS]</scope>
</reference>
<reference key="8">
    <citation type="journal article" date="2010" name="Cell">
        <title>A tissue-specific atlas of mouse protein phosphorylation and expression.</title>
        <authorList>
            <person name="Huttlin E.L."/>
            <person name="Jedrychowski M.P."/>
            <person name="Elias J.E."/>
            <person name="Goswami T."/>
            <person name="Rad R."/>
            <person name="Beausoleil S.A."/>
            <person name="Villen J."/>
            <person name="Haas W."/>
            <person name="Sowa M.E."/>
            <person name="Gygi S.P."/>
        </authorList>
    </citation>
    <scope>PHOSPHORYLATION [LARGE SCALE ANALYSIS] AT THR-418 AND SER-422</scope>
    <scope>IDENTIFICATION BY MASS SPECTROMETRY [LARGE SCALE ANALYSIS]</scope>
    <source>
        <tissue>Brain</tissue>
        <tissue>Brown adipose tissue</tissue>
        <tissue>Heart</tissue>
        <tissue>Liver</tissue>
        <tissue>Lung</tissue>
        <tissue>Spleen</tissue>
        <tissue>Testis</tissue>
    </source>
</reference>
<reference key="9">
    <citation type="journal article" date="2012" name="J. Biol. Chem.">
        <title>Constitutive turnover of phosphorylation at Thr-412 of human p57/coronin-1 regulates the interaction with actin.</title>
        <authorList>
            <person name="Oku T."/>
            <person name="Nakano M."/>
            <person name="Kaneko Y."/>
            <person name="Ando Y."/>
            <person name="Kenmotsu H."/>
            <person name="Itoh S."/>
            <person name="Tsuiji M."/>
            <person name="Seyama Y."/>
            <person name="Toyoshima S."/>
            <person name="Tsuji T."/>
        </authorList>
    </citation>
    <scope>PHOSPHORYLATION AT SER-412</scope>
</reference>
<reference key="10">
    <citation type="journal article" date="2005" name="Proc. Natl. Acad. Sci. U.S.A.">
        <title>A conserved trimerization motif controls the topology of short coiled coils.</title>
        <authorList>
            <person name="Kammerer R.A."/>
            <person name="Kostrewa D."/>
            <person name="Progias P."/>
            <person name="Honnappa S."/>
            <person name="Avila D."/>
            <person name="Lustig A."/>
            <person name="Winkler F.K."/>
            <person name="Pieters J."/>
            <person name="Steinmetz M.O."/>
        </authorList>
    </citation>
    <scope>X-RAY CRYSTALLOGRAPHY (1.2 ANGSTROMS) OF 430-461</scope>
    <scope>COILED-COIL DOMAIN</scope>
</reference>
<reference key="11">
    <citation type="journal article" date="2006" name="Structure">
        <title>The crystal structure of murine coronin-1: a regulator of actin cytoskeletal dynamics in lymphocytes.</title>
        <authorList>
            <person name="Appleton B.A."/>
            <person name="Wu P."/>
            <person name="Wiesmann C."/>
        </authorList>
    </citation>
    <scope>X-RAY CRYSTALLOGRAPHY (1.75 ANGSTROMS) OF 1-402</scope>
    <scope>WD REPEATS</scope>
    <scope>COILED-COIL DOMAIN</scope>
</reference>
<protein>
    <recommendedName>
        <fullName>Coronin-1A</fullName>
    </recommendedName>
    <alternativeName>
        <fullName>Coronin-like protein A</fullName>
        <shortName>Clipin-A</shortName>
    </alternativeName>
    <alternativeName>
        <fullName>Coronin-like protein p57</fullName>
    </alternativeName>
    <alternativeName>
        <fullName>Tryptophan aspartate-containing coat protein</fullName>
        <shortName>TACO</shortName>
    </alternativeName>
</protein>
<sequence>MSRQVVRSSKFRHVFGQPAKADQCYEDVRVSQTTWDSGFCAVNPKFMALICEASGGGAFLVLPLGKTGRVDKNVPLVCGHTAPVLDIAWCPHNDNVIASGSEDCTVMVWEIPDGGLVLPLREPVITLEGHTKRVGIVAWHPTAQNVLLSAGCDNVILVWDVGTGAAVLTLGPDVHPDTIYSVDWSRDGALICTSCRDKRVRVIEPRKGTVVAEKDRPHEGTRPVHAVFVSEGKILTTGFSRMSERQVALWDTKHLEEPLSLQELDTSSGVLLPFFDPDTNIVYLCGKGDSSIRYFEITSEAPFLHYLSMFSSKESQRGMGYMPKRGLEVNKCEIARFYKLHERKCEPIAMTVPRKSDLFQEDLYPPTAGPDPALTAEEWLGGRDAGPLLISLKDGYVPPKSRELRVNRGLDSARRRATPEPSGTPSSDTVSRLEEDVRNLNAIVQKLQERLDRLEETVQAK</sequence>
<evidence type="ECO:0000250" key="1"/>
<evidence type="ECO:0000250" key="2">
    <source>
        <dbReference type="UniProtKB" id="P31146"/>
    </source>
</evidence>
<evidence type="ECO:0000255" key="3">
    <source>
        <dbReference type="PROSITE-ProRule" id="PRU00221"/>
    </source>
</evidence>
<evidence type="ECO:0000256" key="4">
    <source>
        <dbReference type="SAM" id="MobiDB-lite"/>
    </source>
</evidence>
<evidence type="ECO:0000269" key="5">
    <source>
    </source>
</evidence>
<evidence type="ECO:0000269" key="6">
    <source>
    </source>
</evidence>
<evidence type="ECO:0000269" key="7">
    <source>
    </source>
</evidence>
<evidence type="ECO:0000269" key="8">
    <source>
    </source>
</evidence>
<evidence type="ECO:0000305" key="9"/>
<evidence type="ECO:0007744" key="10">
    <source>
    </source>
</evidence>
<evidence type="ECO:0007744" key="11">
    <source>
    </source>
</evidence>
<evidence type="ECO:0007829" key="12">
    <source>
        <dbReference type="PDB" id="2AKF"/>
    </source>
</evidence>
<evidence type="ECO:0007829" key="13">
    <source>
        <dbReference type="PDB" id="2AQ5"/>
    </source>
</evidence>
<feature type="initiator methionine" description="Removed" evidence="2">
    <location>
        <position position="1"/>
    </location>
</feature>
<feature type="chain" id="PRO_0000050921" description="Coronin-1A">
    <location>
        <begin position="2"/>
        <end position="461"/>
    </location>
</feature>
<feature type="repeat" description="WD 1" evidence="3 7">
    <location>
        <begin position="13"/>
        <end position="63"/>
    </location>
</feature>
<feature type="repeat" description="WD 2" evidence="3 7">
    <location>
        <begin position="73"/>
        <end position="110"/>
    </location>
</feature>
<feature type="repeat" description="WD 3" evidence="3 7">
    <location>
        <begin position="123"/>
        <end position="160"/>
    </location>
</feature>
<feature type="repeat" description="WD 4" evidence="3 7">
    <location>
        <begin position="164"/>
        <end position="204"/>
    </location>
</feature>
<feature type="repeat" description="WD 5" evidence="3 7">
    <location>
        <begin position="207"/>
        <end position="251"/>
    </location>
</feature>
<feature type="repeat" description="WD 6" evidence="3 7">
    <location>
        <begin position="258"/>
        <end position="296"/>
    </location>
</feature>
<feature type="repeat" description="WD 7" evidence="3 7">
    <location>
        <begin position="302"/>
        <end position="349"/>
    </location>
</feature>
<feature type="region of interest" description="Disordered" evidence="4">
    <location>
        <begin position="403"/>
        <end position="434"/>
    </location>
</feature>
<feature type="coiled-coil region" evidence="6 7">
    <location>
        <begin position="424"/>
        <end position="461"/>
    </location>
</feature>
<feature type="compositionally biased region" description="Basic and acidic residues" evidence="4">
    <location>
        <begin position="403"/>
        <end position="418"/>
    </location>
</feature>
<feature type="compositionally biased region" description="Polar residues" evidence="4">
    <location>
        <begin position="421"/>
        <end position="430"/>
    </location>
</feature>
<feature type="modified residue" description="N-acetylserine" evidence="2">
    <location>
        <position position="2"/>
    </location>
</feature>
<feature type="modified residue" description="Phosphoserine; by PKC" evidence="2">
    <location>
        <position position="2"/>
    </location>
</feature>
<feature type="modified residue" description="Phosphoserine; by PKC" evidence="8">
    <location>
        <position position="412"/>
    </location>
</feature>
<feature type="modified residue" description="Phosphothreonine" evidence="10 11">
    <location>
        <position position="418"/>
    </location>
</feature>
<feature type="modified residue" description="Phosphoserine" evidence="11">
    <location>
        <position position="422"/>
    </location>
</feature>
<feature type="sequence conflict" description="In Ref. 1; AAD32703 and 4; AAH02136." evidence="9" ref="1 4">
    <original>I</original>
    <variation>V</variation>
    <location>
        <position position="125"/>
    </location>
</feature>
<feature type="sequence conflict" description="In Ref. 4; AAH53398." evidence="9" ref="4">
    <original>S</original>
    <variation>F</variation>
    <location>
        <position position="299"/>
    </location>
</feature>
<feature type="turn" evidence="13">
    <location>
        <begin position="10"/>
        <end position="13"/>
    </location>
</feature>
<feature type="strand" evidence="13">
    <location>
        <begin position="15"/>
        <end position="18"/>
    </location>
</feature>
<feature type="helix" evidence="13">
    <location>
        <begin position="21"/>
        <end position="23"/>
    </location>
</feature>
<feature type="strand" evidence="13">
    <location>
        <begin position="24"/>
        <end position="27"/>
    </location>
</feature>
<feature type="strand" evidence="13">
    <location>
        <begin position="39"/>
        <end position="42"/>
    </location>
</feature>
<feature type="strand" evidence="13">
    <location>
        <begin position="44"/>
        <end position="51"/>
    </location>
</feature>
<feature type="strand" evidence="13">
    <location>
        <begin position="54"/>
        <end position="56"/>
    </location>
</feature>
<feature type="strand" evidence="13">
    <location>
        <begin position="59"/>
        <end position="63"/>
    </location>
</feature>
<feature type="strand" evidence="13">
    <location>
        <begin position="84"/>
        <end position="89"/>
    </location>
</feature>
<feature type="strand" evidence="13">
    <location>
        <begin position="96"/>
        <end position="101"/>
    </location>
</feature>
<feature type="strand" evidence="13">
    <location>
        <begin position="104"/>
        <end position="110"/>
    </location>
</feature>
<feature type="strand" evidence="13">
    <location>
        <begin position="124"/>
        <end position="128"/>
    </location>
</feature>
<feature type="strand" evidence="13">
    <location>
        <begin position="134"/>
        <end position="139"/>
    </location>
</feature>
<feature type="strand" evidence="13">
    <location>
        <begin position="141"/>
        <end position="143"/>
    </location>
</feature>
<feature type="strand" evidence="13">
    <location>
        <begin position="146"/>
        <end position="151"/>
    </location>
</feature>
<feature type="strand" evidence="13">
    <location>
        <begin position="156"/>
        <end position="160"/>
    </location>
</feature>
<feature type="turn" evidence="13">
    <location>
        <begin position="161"/>
        <end position="163"/>
    </location>
</feature>
<feature type="strand" evidence="13">
    <location>
        <begin position="166"/>
        <end position="170"/>
    </location>
</feature>
<feature type="turn" evidence="13">
    <location>
        <begin position="172"/>
        <end position="174"/>
    </location>
</feature>
<feature type="strand" evidence="13">
    <location>
        <begin position="179"/>
        <end position="184"/>
    </location>
</feature>
<feature type="strand" evidence="13">
    <location>
        <begin position="191"/>
        <end position="195"/>
    </location>
</feature>
<feature type="strand" evidence="13">
    <location>
        <begin position="198"/>
        <end position="204"/>
    </location>
</feature>
<feature type="turn" evidence="13">
    <location>
        <begin position="205"/>
        <end position="208"/>
    </location>
</feature>
<feature type="strand" evidence="13">
    <location>
        <begin position="209"/>
        <end position="215"/>
    </location>
</feature>
<feature type="strand" evidence="13">
    <location>
        <begin position="220"/>
        <end position="222"/>
    </location>
</feature>
<feature type="strand" evidence="13">
    <location>
        <begin position="225"/>
        <end position="228"/>
    </location>
</feature>
<feature type="strand" evidence="13">
    <location>
        <begin position="233"/>
        <end position="239"/>
    </location>
</feature>
<feature type="strand" evidence="13">
    <location>
        <begin position="245"/>
        <end position="251"/>
    </location>
</feature>
<feature type="strand" evidence="13">
    <location>
        <begin position="259"/>
        <end position="263"/>
    </location>
</feature>
<feature type="strand" evidence="13">
    <location>
        <begin position="271"/>
        <end position="275"/>
    </location>
</feature>
<feature type="turn" evidence="13">
    <location>
        <begin position="277"/>
        <end position="279"/>
    </location>
</feature>
<feature type="strand" evidence="13">
    <location>
        <begin position="281"/>
        <end position="286"/>
    </location>
</feature>
<feature type="strand" evidence="13">
    <location>
        <begin position="292"/>
        <end position="297"/>
    </location>
</feature>
<feature type="strand" evidence="13">
    <location>
        <begin position="304"/>
        <end position="310"/>
    </location>
</feature>
<feature type="strand" evidence="13">
    <location>
        <begin position="317"/>
        <end position="321"/>
    </location>
</feature>
<feature type="helix" evidence="13">
    <location>
        <begin position="324"/>
        <end position="326"/>
    </location>
</feature>
<feature type="helix" evidence="13">
    <location>
        <begin position="329"/>
        <end position="331"/>
    </location>
</feature>
<feature type="strand" evidence="13">
    <location>
        <begin position="333"/>
        <end position="341"/>
    </location>
</feature>
<feature type="strand" evidence="13">
    <location>
        <begin position="344"/>
        <end position="351"/>
    </location>
</feature>
<feature type="turn" evidence="13">
    <location>
        <begin position="361"/>
        <end position="363"/>
    </location>
</feature>
<feature type="helix" evidence="13">
    <location>
        <begin position="376"/>
        <end position="380"/>
    </location>
</feature>
<feature type="helix" evidence="12">
    <location>
        <begin position="432"/>
        <end position="460"/>
    </location>
</feature>